<protein>
    <recommendedName>
        <fullName evidence="1">Small ribosomal subunit protein uS7</fullName>
    </recommendedName>
    <alternativeName>
        <fullName evidence="2">30S ribosomal protein S7</fullName>
    </alternativeName>
</protein>
<sequence length="156" mass="17470">MPRKGPAPKRPLVNDPVYGSQLVTQLVNKVLLDGKKSLAERIVYGALEQARDKTGTDPVVTLKRALDNVKPALEVRSRRVGGATYQVPVEVRPDRSVTLALRWLVSFSKARREKTMVERLANEILDASNGLGAAVKRREDTHKMAEANRAFAHYRW</sequence>
<organism>
    <name type="scientific">Mycobacterium sp. (strain JLS)</name>
    <dbReference type="NCBI Taxonomy" id="164757"/>
    <lineage>
        <taxon>Bacteria</taxon>
        <taxon>Bacillati</taxon>
        <taxon>Actinomycetota</taxon>
        <taxon>Actinomycetes</taxon>
        <taxon>Mycobacteriales</taxon>
        <taxon>Mycobacteriaceae</taxon>
        <taxon>Mycobacterium</taxon>
    </lineage>
</organism>
<name>RS7_MYCSJ</name>
<gene>
    <name evidence="1" type="primary">rpsG</name>
    <name type="ordered locus">Mjls_1013</name>
</gene>
<comment type="function">
    <text evidence="1">One of the primary rRNA binding proteins, it binds directly to 16S rRNA where it nucleates assembly of the head domain of the 30S subunit. Is located at the subunit interface close to the decoding center, probably blocks exit of the E-site tRNA.</text>
</comment>
<comment type="subunit">
    <text evidence="1">Part of the 30S ribosomal subunit. Contacts proteins S9 and S11.</text>
</comment>
<comment type="similarity">
    <text evidence="1">Belongs to the universal ribosomal protein uS7 family.</text>
</comment>
<keyword id="KW-0687">Ribonucleoprotein</keyword>
<keyword id="KW-0689">Ribosomal protein</keyword>
<keyword id="KW-0694">RNA-binding</keyword>
<keyword id="KW-0699">rRNA-binding</keyword>
<keyword id="KW-0820">tRNA-binding</keyword>
<evidence type="ECO:0000255" key="1">
    <source>
        <dbReference type="HAMAP-Rule" id="MF_00480"/>
    </source>
</evidence>
<evidence type="ECO:0000305" key="2"/>
<reference key="1">
    <citation type="submission" date="2007-02" db="EMBL/GenBank/DDBJ databases">
        <title>Complete sequence of Mycobacterium sp. JLS.</title>
        <authorList>
            <consortium name="US DOE Joint Genome Institute"/>
            <person name="Copeland A."/>
            <person name="Lucas S."/>
            <person name="Lapidus A."/>
            <person name="Barry K."/>
            <person name="Detter J.C."/>
            <person name="Glavina del Rio T."/>
            <person name="Hammon N."/>
            <person name="Israni S."/>
            <person name="Dalin E."/>
            <person name="Tice H."/>
            <person name="Pitluck S."/>
            <person name="Chain P."/>
            <person name="Malfatti S."/>
            <person name="Shin M."/>
            <person name="Vergez L."/>
            <person name="Schmutz J."/>
            <person name="Larimer F."/>
            <person name="Land M."/>
            <person name="Hauser L."/>
            <person name="Kyrpides N."/>
            <person name="Mikhailova N."/>
            <person name="Miller C.D."/>
            <person name="Anderson A.J."/>
            <person name="Sims R.C."/>
            <person name="Richardson P."/>
        </authorList>
    </citation>
    <scope>NUCLEOTIDE SEQUENCE [LARGE SCALE GENOMIC DNA]</scope>
    <source>
        <strain>JLS</strain>
    </source>
</reference>
<dbReference type="EMBL" id="CP000580">
    <property type="protein sequence ID" value="ABN96821.1"/>
    <property type="molecule type" value="Genomic_DNA"/>
</dbReference>
<dbReference type="SMR" id="A3PV94"/>
<dbReference type="KEGG" id="mjl:Mjls_1013"/>
<dbReference type="HOGENOM" id="CLU_072226_1_1_11"/>
<dbReference type="BioCyc" id="MSP164757:G1G8C-1025-MONOMER"/>
<dbReference type="GO" id="GO:0015935">
    <property type="term" value="C:small ribosomal subunit"/>
    <property type="evidence" value="ECO:0007669"/>
    <property type="project" value="InterPro"/>
</dbReference>
<dbReference type="GO" id="GO:0019843">
    <property type="term" value="F:rRNA binding"/>
    <property type="evidence" value="ECO:0007669"/>
    <property type="project" value="UniProtKB-UniRule"/>
</dbReference>
<dbReference type="GO" id="GO:0003735">
    <property type="term" value="F:structural constituent of ribosome"/>
    <property type="evidence" value="ECO:0007669"/>
    <property type="project" value="InterPro"/>
</dbReference>
<dbReference type="GO" id="GO:0000049">
    <property type="term" value="F:tRNA binding"/>
    <property type="evidence" value="ECO:0007669"/>
    <property type="project" value="UniProtKB-UniRule"/>
</dbReference>
<dbReference type="GO" id="GO:0006412">
    <property type="term" value="P:translation"/>
    <property type="evidence" value="ECO:0007669"/>
    <property type="project" value="UniProtKB-UniRule"/>
</dbReference>
<dbReference type="CDD" id="cd14869">
    <property type="entry name" value="uS7_Bacteria"/>
    <property type="match status" value="1"/>
</dbReference>
<dbReference type="FunFam" id="1.10.455.10:FF:000001">
    <property type="entry name" value="30S ribosomal protein S7"/>
    <property type="match status" value="1"/>
</dbReference>
<dbReference type="Gene3D" id="1.10.455.10">
    <property type="entry name" value="Ribosomal protein S7 domain"/>
    <property type="match status" value="1"/>
</dbReference>
<dbReference type="HAMAP" id="MF_00480_B">
    <property type="entry name" value="Ribosomal_uS7_B"/>
    <property type="match status" value="1"/>
</dbReference>
<dbReference type="InterPro" id="IPR000235">
    <property type="entry name" value="Ribosomal_uS7"/>
</dbReference>
<dbReference type="InterPro" id="IPR005717">
    <property type="entry name" value="Ribosomal_uS7_bac/org-type"/>
</dbReference>
<dbReference type="InterPro" id="IPR020606">
    <property type="entry name" value="Ribosomal_uS7_CS"/>
</dbReference>
<dbReference type="InterPro" id="IPR023798">
    <property type="entry name" value="Ribosomal_uS7_dom"/>
</dbReference>
<dbReference type="InterPro" id="IPR036823">
    <property type="entry name" value="Ribosomal_uS7_dom_sf"/>
</dbReference>
<dbReference type="NCBIfam" id="TIGR01029">
    <property type="entry name" value="rpsG_bact"/>
    <property type="match status" value="1"/>
</dbReference>
<dbReference type="PANTHER" id="PTHR11205">
    <property type="entry name" value="RIBOSOMAL PROTEIN S7"/>
    <property type="match status" value="1"/>
</dbReference>
<dbReference type="Pfam" id="PF00177">
    <property type="entry name" value="Ribosomal_S7"/>
    <property type="match status" value="1"/>
</dbReference>
<dbReference type="PIRSF" id="PIRSF002122">
    <property type="entry name" value="RPS7p_RPS7a_RPS5e_RPS7o"/>
    <property type="match status" value="1"/>
</dbReference>
<dbReference type="SUPFAM" id="SSF47973">
    <property type="entry name" value="Ribosomal protein S7"/>
    <property type="match status" value="1"/>
</dbReference>
<dbReference type="PROSITE" id="PS00052">
    <property type="entry name" value="RIBOSOMAL_S7"/>
    <property type="match status" value="1"/>
</dbReference>
<proteinExistence type="inferred from homology"/>
<feature type="chain" id="PRO_1000014235" description="Small ribosomal subunit protein uS7">
    <location>
        <begin position="1"/>
        <end position="156"/>
    </location>
</feature>
<accession>A3PV94</accession>